<name>TYW1_PYRAB</name>
<proteinExistence type="evidence at protein level"/>
<feature type="chain" id="PRO_0000425565" description="S-adenosyl-L-methionine-dependent tRNA 4-demethylwyosine synthase">
    <location>
        <begin position="1"/>
        <end position="342"/>
    </location>
</feature>
<feature type="domain" description="Radical SAM core" evidence="2">
    <location>
        <begin position="64"/>
        <end position="312"/>
    </location>
</feature>
<feature type="binding site" evidence="1">
    <location>
        <position position="45"/>
    </location>
    <ligand>
        <name>[4Fe-4S] cluster</name>
        <dbReference type="ChEBI" id="CHEBI:49883"/>
        <label>1</label>
    </ligand>
</feature>
<feature type="binding site" evidence="1">
    <location>
        <position position="58"/>
    </location>
    <ligand>
        <name>[4Fe-4S] cluster</name>
        <dbReference type="ChEBI" id="CHEBI:49883"/>
        <label>1</label>
    </ligand>
</feature>
<feature type="binding site" evidence="1">
    <location>
        <position position="71"/>
    </location>
    <ligand>
        <name>[4Fe-4S] cluster</name>
        <dbReference type="ChEBI" id="CHEBI:49883"/>
        <label>1</label>
    </ligand>
</feature>
<feature type="binding site" evidence="1">
    <location>
        <position position="81"/>
    </location>
    <ligand>
        <name>[4Fe-4S] cluster</name>
        <dbReference type="ChEBI" id="CHEBI:49883"/>
        <label>2</label>
        <note>4Fe-4S-S-AdoMet</note>
    </ligand>
</feature>
<feature type="binding site" evidence="1">
    <location>
        <position position="85"/>
    </location>
    <ligand>
        <name>[4Fe-4S] cluster</name>
        <dbReference type="ChEBI" id="CHEBI:49883"/>
        <label>2</label>
        <note>4Fe-4S-S-AdoMet</note>
    </ligand>
</feature>
<feature type="binding site" evidence="1">
    <location>
        <position position="88"/>
    </location>
    <ligand>
        <name>[4Fe-4S] cluster</name>
        <dbReference type="ChEBI" id="CHEBI:49883"/>
        <label>2</label>
        <note>4Fe-4S-S-AdoMet</note>
    </ligand>
</feature>
<comment type="function">
    <text evidence="1 3">Component of the wyosine derivatives biosynthesis pathway that catalyzes the condensation of N-methylguanine with 2 carbon atoms from pyruvate to form the tricyclic 4-demethylwyosine (imG-14) on guanosine-37 of tRNA(Phe).</text>
</comment>
<comment type="catalytic activity">
    <reaction evidence="1 3">
        <text>N(1)-methylguanosine(37) in tRNA(Phe) + pyruvate + S-adenosyl-L-methionine = 4-demethylwyosine(37) in tRNA(Phe) + 5'-deoxyadenosine + L-methionine + CO2 + H2O</text>
        <dbReference type="Rhea" id="RHEA:36347"/>
        <dbReference type="Rhea" id="RHEA-COMP:10164"/>
        <dbReference type="Rhea" id="RHEA-COMP:10165"/>
        <dbReference type="ChEBI" id="CHEBI:15361"/>
        <dbReference type="ChEBI" id="CHEBI:15377"/>
        <dbReference type="ChEBI" id="CHEBI:16526"/>
        <dbReference type="ChEBI" id="CHEBI:17319"/>
        <dbReference type="ChEBI" id="CHEBI:57844"/>
        <dbReference type="ChEBI" id="CHEBI:59789"/>
        <dbReference type="ChEBI" id="CHEBI:64315"/>
        <dbReference type="ChEBI" id="CHEBI:73542"/>
        <dbReference type="EC" id="4.1.3.44"/>
    </reaction>
</comment>
<comment type="cofactor">
    <cofactor evidence="5">
        <name>[4Fe-4S] cluster</name>
        <dbReference type="ChEBI" id="CHEBI:49883"/>
    </cofactor>
    <text evidence="5">Binds 2 [4Fe-4S] clusters (PubMed:23043105). Binds 1 4Fe-4S cluster coordinated with 3 cysteines and an exchangeable S-adenosyl-L-methionine.</text>
</comment>
<comment type="subunit">
    <text evidence="1">Monomer.</text>
</comment>
<comment type="subcellular location">
    <subcellularLocation>
        <location evidence="1">Cytoplasm</location>
    </subcellularLocation>
</comment>
<comment type="similarity">
    <text evidence="1">Belongs to the TYW1 family.</text>
</comment>
<comment type="sequence caution" evidence="4">
    <conflict type="erroneous initiation">
        <sequence resource="EMBL-CDS" id="CCE69851"/>
    </conflict>
    <text>Truncated N-terminus.</text>
</comment>
<dbReference type="EC" id="4.1.3.44" evidence="1"/>
<dbReference type="EMBL" id="AJ248284">
    <property type="protein sequence ID" value="CAB49390.1"/>
    <property type="molecule type" value="Genomic_DNA"/>
</dbReference>
<dbReference type="EMBL" id="HE613800">
    <property type="protein sequence ID" value="CCE69851.1"/>
    <property type="status" value="ALT_INIT"/>
    <property type="molecule type" value="Genomic_DNA"/>
</dbReference>
<dbReference type="PIR" id="G75163">
    <property type="entry name" value="G75163"/>
</dbReference>
<dbReference type="SMR" id="Q9V1F9"/>
<dbReference type="STRING" id="272844.PAB2039"/>
<dbReference type="KEGG" id="pab:PAB2039"/>
<dbReference type="PATRIC" id="fig|272844.11.peg.495"/>
<dbReference type="eggNOG" id="arCOG04174">
    <property type="taxonomic scope" value="Archaea"/>
</dbReference>
<dbReference type="HOGENOM" id="CLU_007952_3_0_2"/>
<dbReference type="PhylomeDB" id="Q9V1F9"/>
<dbReference type="BRENDA" id="4.1.3.44">
    <property type="organism ID" value="5242"/>
</dbReference>
<dbReference type="Proteomes" id="UP000000810">
    <property type="component" value="Chromosome"/>
</dbReference>
<dbReference type="Proteomes" id="UP000009139">
    <property type="component" value="Chromosome"/>
</dbReference>
<dbReference type="GO" id="GO:0005737">
    <property type="term" value="C:cytoplasm"/>
    <property type="evidence" value="ECO:0007669"/>
    <property type="project" value="UniProtKB-SubCell"/>
</dbReference>
<dbReference type="GO" id="GO:0051539">
    <property type="term" value="F:4 iron, 4 sulfur cluster binding"/>
    <property type="evidence" value="ECO:0007669"/>
    <property type="project" value="UniProtKB-UniRule"/>
</dbReference>
<dbReference type="GO" id="GO:0046872">
    <property type="term" value="F:metal ion binding"/>
    <property type="evidence" value="ECO:0007669"/>
    <property type="project" value="UniProtKB-KW"/>
</dbReference>
<dbReference type="GO" id="GO:0102521">
    <property type="term" value="F:tRNA-4-demethylwyosine synthase activity"/>
    <property type="evidence" value="ECO:0007669"/>
    <property type="project" value="UniProtKB-EC"/>
</dbReference>
<dbReference type="GO" id="GO:0008033">
    <property type="term" value="P:tRNA processing"/>
    <property type="evidence" value="ECO:0007669"/>
    <property type="project" value="UniProtKB-UniRule"/>
</dbReference>
<dbReference type="CDD" id="cd01335">
    <property type="entry name" value="Radical_SAM"/>
    <property type="match status" value="1"/>
</dbReference>
<dbReference type="Gene3D" id="3.20.20.70">
    <property type="entry name" value="Aldolase class I"/>
    <property type="match status" value="1"/>
</dbReference>
<dbReference type="HAMAP" id="MF_01921">
    <property type="entry name" value="TYW1_archaea"/>
    <property type="match status" value="1"/>
</dbReference>
<dbReference type="InterPro" id="IPR013785">
    <property type="entry name" value="Aldolase_TIM"/>
</dbReference>
<dbReference type="InterPro" id="IPR007197">
    <property type="entry name" value="rSAM"/>
</dbReference>
<dbReference type="InterPro" id="IPR013917">
    <property type="entry name" value="tRNA_wybutosine-synth"/>
</dbReference>
<dbReference type="InterPro" id="IPR034556">
    <property type="entry name" value="tRNA_wybutosine-synthase"/>
</dbReference>
<dbReference type="InterPro" id="IPR023993">
    <property type="entry name" value="TYW1_archaea"/>
</dbReference>
<dbReference type="NCBIfam" id="TIGR03972">
    <property type="entry name" value="rSAM_TYW1"/>
    <property type="match status" value="1"/>
</dbReference>
<dbReference type="PANTHER" id="PTHR13930">
    <property type="entry name" value="S-ADENOSYL-L-METHIONINE-DEPENDENT TRNA 4-DEMETHYLWYOSINE SYNTHASE"/>
    <property type="match status" value="1"/>
</dbReference>
<dbReference type="PANTHER" id="PTHR13930:SF0">
    <property type="entry name" value="S-ADENOSYL-L-METHIONINE-DEPENDENT TRNA 4-DEMETHYLWYOSINE SYNTHASE TYW1-RELATED"/>
    <property type="match status" value="1"/>
</dbReference>
<dbReference type="Pfam" id="PF04055">
    <property type="entry name" value="Radical_SAM"/>
    <property type="match status" value="1"/>
</dbReference>
<dbReference type="Pfam" id="PF08608">
    <property type="entry name" value="Wyosine_form"/>
    <property type="match status" value="1"/>
</dbReference>
<dbReference type="SFLD" id="SFLDF00284">
    <property type="entry name" value="tRNA_wybutosine-synthesizing"/>
    <property type="match status" value="1"/>
</dbReference>
<dbReference type="SFLD" id="SFLDG01071">
    <property type="entry name" value="tRNA_wybutosine-synthesizing"/>
    <property type="match status" value="1"/>
</dbReference>
<dbReference type="SUPFAM" id="SSF102114">
    <property type="entry name" value="Radical SAM enzymes"/>
    <property type="match status" value="1"/>
</dbReference>
<dbReference type="PROSITE" id="PS51918">
    <property type="entry name" value="RADICAL_SAM"/>
    <property type="match status" value="1"/>
</dbReference>
<gene>
    <name evidence="1" type="primary">taw1</name>
    <name type="ordered locus">PYRAB04680</name>
    <name type="ORF">PAB2039</name>
</gene>
<reference key="1">
    <citation type="journal article" date="2003" name="Mol. Microbiol.">
        <title>An integrated analysis of the genome of the hyperthermophilic archaeon Pyrococcus abyssi.</title>
        <authorList>
            <person name="Cohen G.N."/>
            <person name="Barbe V."/>
            <person name="Flament D."/>
            <person name="Galperin M."/>
            <person name="Heilig R."/>
            <person name="Lecompte O."/>
            <person name="Poch O."/>
            <person name="Prieur D."/>
            <person name="Querellou J."/>
            <person name="Ripp R."/>
            <person name="Thierry J.-C."/>
            <person name="Van der Oost J."/>
            <person name="Weissenbach J."/>
            <person name="Zivanovic Y."/>
            <person name="Forterre P."/>
        </authorList>
    </citation>
    <scope>NUCLEOTIDE SEQUENCE [LARGE SCALE GENOMIC DNA]</scope>
    <source>
        <strain>GE5 / Orsay</strain>
    </source>
</reference>
<reference key="2">
    <citation type="journal article" date="2012" name="Curr. Microbiol.">
        <title>Re-annotation of two hyperthermophilic archaea Pyrococcus abyssi GE5 and Pyrococcus furiosus DSM 3638.</title>
        <authorList>
            <person name="Gao J."/>
            <person name="Wang J."/>
        </authorList>
    </citation>
    <scope>GENOME REANNOTATION</scope>
    <source>
        <strain>GE5 / Orsay</strain>
    </source>
</reference>
<reference key="3">
    <citation type="journal article" date="2012" name="J. Biol. Chem.">
        <title>4-Demethylwyosine synthase from Pyrococcus abyssi is a radical-S-adenosyl-L-methionine enzyme with an additional [4Fe-4S](+2) cluster that interacts with the pyruvate co-substrate.</title>
        <authorList>
            <person name="Perche-Letuvee P."/>
            <person name="Kathirvelu V."/>
            <person name="Berggren G."/>
            <person name="Clemancey M."/>
            <person name="Latour J.M."/>
            <person name="Maurel V."/>
            <person name="Douki T."/>
            <person name="Armengaud J."/>
            <person name="Mulliez E."/>
            <person name="Fontecave M."/>
            <person name="Garcia-Serres R."/>
            <person name="Gambarelli S."/>
            <person name="Atta M."/>
        </authorList>
    </citation>
    <scope>FUNCTION</scope>
    <scope>CATALYTIC ACTIVITY</scope>
    <scope>COFACTOR</scope>
</reference>
<accession>Q9V1F9</accession>
<accession>G8ZGH2</accession>
<protein>
    <recommendedName>
        <fullName evidence="1">S-adenosyl-L-methionine-dependent tRNA 4-demethylwyosine synthase</fullName>
        <ecNumber evidence="1">4.1.3.44</ecNumber>
    </recommendedName>
    <alternativeName>
        <fullName evidence="1">tRNA wyosine derivatives biosynthesis protein Taw1</fullName>
    </alternativeName>
</protein>
<evidence type="ECO:0000255" key="1">
    <source>
        <dbReference type="HAMAP-Rule" id="MF_01921"/>
    </source>
</evidence>
<evidence type="ECO:0000255" key="2">
    <source>
        <dbReference type="PROSITE-ProRule" id="PRU01266"/>
    </source>
</evidence>
<evidence type="ECO:0000269" key="3">
    <source>
    </source>
</evidence>
<evidence type="ECO:0000305" key="4"/>
<evidence type="ECO:0000305" key="5">
    <source>
    </source>
</evidence>
<organism>
    <name type="scientific">Pyrococcus abyssi (strain GE5 / Orsay)</name>
    <dbReference type="NCBI Taxonomy" id="272844"/>
    <lineage>
        <taxon>Archaea</taxon>
        <taxon>Methanobacteriati</taxon>
        <taxon>Methanobacteriota</taxon>
        <taxon>Thermococci</taxon>
        <taxon>Thermococcales</taxon>
        <taxon>Thermococcaceae</taxon>
        <taxon>Pyrococcus</taxon>
    </lineage>
</organism>
<sequence length="342" mass="39927">MREMITIKPGKITVQANPNMPEEVANLFRKQHYEIVGRHSGVKLCHWLKKSLTEGRFCYKQKFYGIHSHRCLQMTPVLAWCTHNCIFCWRPMETFLGTELPQPWDDPEFIVEESIKAQRKLLIGYKGNPKVDKKKFEEAWEPKHAAISLSGEPMLYPYMGDLVEEFHKRGFTTFIVTNGTVPERLEEMIKEDKLPTQLYVSITAPDIETYNSVNIPMIPDGWERIMRFLELMRDLPTRTVVRLTLVKGENMHSPEKYAKLILKARPMFVEAKAYMFVGYSRNRLTINNMPSHQDIREFAEALVKHLPGYHIEDEYEPSRVVLIMRDDVDPQGTGVNGRFIKH</sequence>
<keyword id="KW-0004">4Fe-4S</keyword>
<keyword id="KW-0963">Cytoplasm</keyword>
<keyword id="KW-0408">Iron</keyword>
<keyword id="KW-0411">Iron-sulfur</keyword>
<keyword id="KW-0456">Lyase</keyword>
<keyword id="KW-0479">Metal-binding</keyword>
<keyword id="KW-0949">S-adenosyl-L-methionine</keyword>
<keyword id="KW-0819">tRNA processing</keyword>